<name>S22AG_MOUSE</name>
<accession>Q497L8</accession>
<accession>Q3LVC1</accession>
<protein>
    <recommendedName>
        <fullName evidence="1">Solute carrier family 22 member 16</fullName>
    </recommendedName>
    <alternativeName>
        <fullName evidence="1">Carnitine transporter 2</fullName>
        <shortName evidence="1">CT2</shortName>
    </alternativeName>
</protein>
<proteinExistence type="evidence at transcript level"/>
<organism>
    <name type="scientific">Mus musculus</name>
    <name type="common">Mouse</name>
    <dbReference type="NCBI Taxonomy" id="10090"/>
    <lineage>
        <taxon>Eukaryota</taxon>
        <taxon>Metazoa</taxon>
        <taxon>Chordata</taxon>
        <taxon>Craniata</taxon>
        <taxon>Vertebrata</taxon>
        <taxon>Euteleostomi</taxon>
        <taxon>Mammalia</taxon>
        <taxon>Eutheria</taxon>
        <taxon>Euarchontoglires</taxon>
        <taxon>Glires</taxon>
        <taxon>Rodentia</taxon>
        <taxon>Myomorpha</taxon>
        <taxon>Muroidea</taxon>
        <taxon>Muridae</taxon>
        <taxon>Murinae</taxon>
        <taxon>Mus</taxon>
        <taxon>Mus</taxon>
    </lineage>
</organism>
<dbReference type="EMBL" id="DQ164804">
    <property type="protein sequence ID" value="ABA10822.1"/>
    <property type="molecule type" value="mRNA"/>
</dbReference>
<dbReference type="EMBL" id="DQ164805">
    <property type="protein sequence ID" value="ABA10823.1"/>
    <property type="molecule type" value="mRNA"/>
</dbReference>
<dbReference type="EMBL" id="BC100473">
    <property type="protein sequence ID" value="AAI00474.1"/>
    <property type="molecule type" value="mRNA"/>
</dbReference>
<dbReference type="CCDS" id="CCDS23796.1">
    <molecule id="Q497L8-1"/>
</dbReference>
<dbReference type="RefSeq" id="NP_081848.1">
    <molecule id="Q497L8-1"/>
    <property type="nucleotide sequence ID" value="NM_027572.1"/>
</dbReference>
<dbReference type="SMR" id="Q497L8"/>
<dbReference type="FunCoup" id="Q497L8">
    <property type="interactions" value="33"/>
</dbReference>
<dbReference type="STRING" id="10090.ENSMUSP00000077428"/>
<dbReference type="GlyCosmos" id="Q497L8">
    <property type="glycosylation" value="3 sites, No reported glycans"/>
</dbReference>
<dbReference type="GlyGen" id="Q497L8">
    <property type="glycosylation" value="3 sites"/>
</dbReference>
<dbReference type="PhosphoSitePlus" id="Q497L8"/>
<dbReference type="SwissPalm" id="Q497L8"/>
<dbReference type="jPOST" id="Q497L8"/>
<dbReference type="PaxDb" id="10090-ENSMUSP00000077428"/>
<dbReference type="ProteomicsDB" id="260888">
    <molecule id="Q497L8-1"/>
</dbReference>
<dbReference type="ProteomicsDB" id="260889">
    <molecule id="Q497L8-2"/>
</dbReference>
<dbReference type="Antibodypedia" id="32327">
    <property type="antibodies" value="110 antibodies from 22 providers"/>
</dbReference>
<dbReference type="DNASU" id="70840"/>
<dbReference type="Ensembl" id="ENSMUST00000019978.9">
    <molecule id="Q497L8-2"/>
    <property type="protein sequence ID" value="ENSMUSP00000019978.9"/>
    <property type="gene ID" value="ENSMUSG00000019834.16"/>
</dbReference>
<dbReference type="Ensembl" id="ENSMUST00000078314.14">
    <molecule id="Q497L8-1"/>
    <property type="protein sequence ID" value="ENSMUSP00000077428.8"/>
    <property type="gene ID" value="ENSMUSG00000019834.16"/>
</dbReference>
<dbReference type="GeneID" id="70840"/>
<dbReference type="KEGG" id="mmu:70840"/>
<dbReference type="UCSC" id="uc007ewz.1">
    <molecule id="Q497L8-1"/>
    <property type="organism name" value="mouse"/>
</dbReference>
<dbReference type="AGR" id="MGI:1918090"/>
<dbReference type="CTD" id="85413"/>
<dbReference type="MGI" id="MGI:1918090">
    <property type="gene designation" value="Slc22a16"/>
</dbReference>
<dbReference type="VEuPathDB" id="HostDB:ENSMUSG00000019834"/>
<dbReference type="eggNOG" id="KOG0255">
    <property type="taxonomic scope" value="Eukaryota"/>
</dbReference>
<dbReference type="GeneTree" id="ENSGT00940000160723"/>
<dbReference type="HOGENOM" id="CLU_001265_33_4_1"/>
<dbReference type="InParanoid" id="Q497L8"/>
<dbReference type="OMA" id="MEAYMGA"/>
<dbReference type="OrthoDB" id="68630at9989"/>
<dbReference type="PhylomeDB" id="Q497L8"/>
<dbReference type="TreeFam" id="TF315847"/>
<dbReference type="Reactome" id="R-MMU-549127">
    <property type="pathway name" value="Organic cation transport"/>
</dbReference>
<dbReference type="BioGRID-ORCS" id="70840">
    <property type="hits" value="2 hits in 79 CRISPR screens"/>
</dbReference>
<dbReference type="PRO" id="PR:Q497L8"/>
<dbReference type="Proteomes" id="UP000000589">
    <property type="component" value="Chromosome 10"/>
</dbReference>
<dbReference type="RNAct" id="Q497L8">
    <property type="molecule type" value="protein"/>
</dbReference>
<dbReference type="Bgee" id="ENSMUSG00000019834">
    <property type="expression patterns" value="Expressed in spermatid and 90 other cell types or tissues"/>
</dbReference>
<dbReference type="ExpressionAtlas" id="Q497L8">
    <property type="expression patterns" value="baseline and differential"/>
</dbReference>
<dbReference type="GO" id="GO:0005886">
    <property type="term" value="C:plasma membrane"/>
    <property type="evidence" value="ECO:0000250"/>
    <property type="project" value="UniProtKB"/>
</dbReference>
<dbReference type="GO" id="GO:0005275">
    <property type="term" value="F:amine transmembrane transporter activity"/>
    <property type="evidence" value="ECO:0000266"/>
    <property type="project" value="MGI"/>
</dbReference>
<dbReference type="GO" id="GO:0015226">
    <property type="term" value="F:carnitine transmembrane transporter activity"/>
    <property type="evidence" value="ECO:0000250"/>
    <property type="project" value="UniProtKB"/>
</dbReference>
<dbReference type="GO" id="GO:0015101">
    <property type="term" value="F:organic cation transmembrane transporter activity"/>
    <property type="evidence" value="ECO:0000250"/>
    <property type="project" value="UniProtKB"/>
</dbReference>
<dbReference type="GO" id="GO:0015606">
    <property type="term" value="F:spermidine transmembrane transporter activity"/>
    <property type="evidence" value="ECO:0000250"/>
    <property type="project" value="UniProtKB"/>
</dbReference>
<dbReference type="GO" id="GO:1902603">
    <property type="term" value="P:carnitine transmembrane transport"/>
    <property type="evidence" value="ECO:0000250"/>
    <property type="project" value="UniProtKB"/>
</dbReference>
<dbReference type="GO" id="GO:0015879">
    <property type="term" value="P:carnitine transport"/>
    <property type="evidence" value="ECO:0000266"/>
    <property type="project" value="MGI"/>
</dbReference>
<dbReference type="GO" id="GO:0030154">
    <property type="term" value="P:cell differentiation"/>
    <property type="evidence" value="ECO:0007669"/>
    <property type="project" value="UniProtKB-KW"/>
</dbReference>
<dbReference type="GO" id="GO:0006811">
    <property type="term" value="P:monoatomic ion transport"/>
    <property type="evidence" value="ECO:0007669"/>
    <property type="project" value="UniProtKB-KW"/>
</dbReference>
<dbReference type="GO" id="GO:0015695">
    <property type="term" value="P:organic cation transport"/>
    <property type="evidence" value="ECO:0000250"/>
    <property type="project" value="UniProtKB"/>
</dbReference>
<dbReference type="GO" id="GO:0007283">
    <property type="term" value="P:spermatogenesis"/>
    <property type="evidence" value="ECO:0007669"/>
    <property type="project" value="UniProtKB-KW"/>
</dbReference>
<dbReference type="GO" id="GO:1903711">
    <property type="term" value="P:spermidine transmembrane transport"/>
    <property type="evidence" value="ECO:0000250"/>
    <property type="project" value="UniProtKB"/>
</dbReference>
<dbReference type="CDD" id="cd17375">
    <property type="entry name" value="MFS_SLC22A16_CT2"/>
    <property type="match status" value="1"/>
</dbReference>
<dbReference type="Gene3D" id="1.20.1250.20">
    <property type="entry name" value="MFS general substrate transporter like domains"/>
    <property type="match status" value="1"/>
</dbReference>
<dbReference type="InterPro" id="IPR005828">
    <property type="entry name" value="MFS_sugar_transport-like"/>
</dbReference>
<dbReference type="InterPro" id="IPR036259">
    <property type="entry name" value="MFS_trans_sf"/>
</dbReference>
<dbReference type="PANTHER" id="PTHR24064">
    <property type="entry name" value="SOLUTE CARRIER FAMILY 22 MEMBER"/>
    <property type="match status" value="1"/>
</dbReference>
<dbReference type="Pfam" id="PF00083">
    <property type="entry name" value="Sugar_tr"/>
    <property type="match status" value="1"/>
</dbReference>
<dbReference type="SUPFAM" id="SSF103473">
    <property type="entry name" value="MFS general substrate transporter"/>
    <property type="match status" value="1"/>
</dbReference>
<keyword id="KW-0025">Alternative splicing</keyword>
<keyword id="KW-1003">Cell membrane</keyword>
<keyword id="KW-0217">Developmental protein</keyword>
<keyword id="KW-0221">Differentiation</keyword>
<keyword id="KW-0325">Glycoprotein</keyword>
<keyword id="KW-0406">Ion transport</keyword>
<keyword id="KW-0472">Membrane</keyword>
<keyword id="KW-1185">Reference proteome</keyword>
<keyword id="KW-0744">Spermatogenesis</keyword>
<keyword id="KW-0812">Transmembrane</keyword>
<keyword id="KW-1133">Transmembrane helix</keyword>
<keyword id="KW-0813">Transport</keyword>
<feature type="chain" id="PRO_0000318992" description="Solute carrier family 22 member 16">
    <location>
        <begin position="1"/>
        <end position="649"/>
    </location>
</feature>
<feature type="transmembrane region" description="Helical" evidence="2">
    <location>
        <begin position="19"/>
        <end position="39"/>
    </location>
</feature>
<feature type="transmembrane region" description="Helical" evidence="2">
    <location>
        <begin position="156"/>
        <end position="176"/>
    </location>
</feature>
<feature type="transmembrane region" description="Helical" evidence="2">
    <location>
        <begin position="190"/>
        <end position="210"/>
    </location>
</feature>
<feature type="transmembrane region" description="Helical" evidence="2">
    <location>
        <begin position="214"/>
        <end position="234"/>
    </location>
</feature>
<feature type="transmembrane region" description="Helical" evidence="2">
    <location>
        <begin position="244"/>
        <end position="264"/>
    </location>
</feature>
<feature type="transmembrane region" description="Helical" evidence="2">
    <location>
        <begin position="268"/>
        <end position="288"/>
    </location>
</feature>
<feature type="transmembrane region" description="Helical" evidence="2">
    <location>
        <begin position="356"/>
        <end position="376"/>
    </location>
</feature>
<feature type="transmembrane region" description="Helical" evidence="2">
    <location>
        <begin position="389"/>
        <end position="409"/>
    </location>
</feature>
<feature type="transmembrane region" description="Helical" evidence="2">
    <location>
        <begin position="417"/>
        <end position="437"/>
    </location>
</feature>
<feature type="transmembrane region" description="Helical" evidence="2">
    <location>
        <begin position="445"/>
        <end position="465"/>
    </location>
</feature>
<feature type="transmembrane region" description="Helical" evidence="2">
    <location>
        <begin position="475"/>
        <end position="495"/>
    </location>
</feature>
<feature type="transmembrane region" description="Helical" evidence="2">
    <location>
        <begin position="501"/>
        <end position="521"/>
    </location>
</feature>
<feature type="region of interest" description="Disordered" evidence="3">
    <location>
        <begin position="530"/>
        <end position="560"/>
    </location>
</feature>
<feature type="region of interest" description="Disordered" evidence="3">
    <location>
        <begin position="579"/>
        <end position="649"/>
    </location>
</feature>
<feature type="compositionally biased region" description="Polar residues" evidence="3">
    <location>
        <begin position="530"/>
        <end position="544"/>
    </location>
</feature>
<feature type="glycosylation site" description="N-linked (GlcNAc...) asparagine" evidence="2">
    <location>
        <position position="65"/>
    </location>
</feature>
<feature type="glycosylation site" description="N-linked (GlcNAc...) asparagine" evidence="2">
    <location>
        <position position="108"/>
    </location>
</feature>
<feature type="glycosylation site" description="N-linked (GlcNAc...) asparagine" evidence="2">
    <location>
        <position position="315"/>
    </location>
</feature>
<feature type="splice variant" id="VSP_031339" description="In isoform 2." evidence="4">
    <original>MESCNVELIFDHIGHFGR</original>
    <variation>MHKSGQQPMTWLVLLSIGHRRRRTLLGLGRCRQYSHPFG</variation>
    <location>
        <begin position="1"/>
        <end position="18"/>
    </location>
</feature>
<evidence type="ECO:0000250" key="1">
    <source>
        <dbReference type="UniProtKB" id="Q86VW1"/>
    </source>
</evidence>
<evidence type="ECO:0000255" key="2"/>
<evidence type="ECO:0000256" key="3">
    <source>
        <dbReference type="SAM" id="MobiDB-lite"/>
    </source>
</evidence>
<evidence type="ECO:0000303" key="4">
    <source ref="1"/>
</evidence>
<evidence type="ECO:0000305" key="5"/>
<evidence type="ECO:0000312" key="6">
    <source>
        <dbReference type="MGI" id="MGI:1918090"/>
    </source>
</evidence>
<comment type="function">
    <text evidence="1">Facilitative organic cation transporter that mediates the transport of carnitine as well as the polyamine spermidine. Mediates the partially Na(+)-dependent bidirectional transport of carnitine. May mediate L-carnitine secretion from testis epididymal epithelium into the lumen which is involved in the maturation of spermatozoa.</text>
</comment>
<comment type="catalytic activity">
    <reaction evidence="1">
        <text>(R)-carnitine(in) = (R)-carnitine(out)</text>
        <dbReference type="Rhea" id="RHEA:34959"/>
        <dbReference type="ChEBI" id="CHEBI:16347"/>
    </reaction>
</comment>
<comment type="catalytic activity">
    <reaction evidence="1">
        <text>spermidine(in) = spermidine(out)</text>
        <dbReference type="Rhea" id="RHEA:35039"/>
        <dbReference type="ChEBI" id="CHEBI:57834"/>
    </reaction>
</comment>
<comment type="subcellular location">
    <subcellularLocation>
        <location evidence="1">Cell membrane</location>
        <topology evidence="1">Multi-pass membrane protein</topology>
    </subcellularLocation>
    <text evidence="1">Detected in the plasma membrane of Sertoli cells and in the luminal membrane of epithelial cells in the epididymis.</text>
</comment>
<comment type="alternative products">
    <event type="alternative splicing"/>
    <isoform>
        <id>Q497L8-1</id>
        <name>1</name>
        <sequence type="displayed"/>
    </isoform>
    <isoform>
        <id>Q497L8-2</id>
        <name>2</name>
        <sequence type="described" ref="VSP_031339"/>
    </isoform>
</comment>
<comment type="similarity">
    <text evidence="5">Belongs to the major facilitator (TC 2.A.1) superfamily. Organic cation transporter (TC 2.A.1.19) family.</text>
</comment>
<reference key="1">
    <citation type="submission" date="2005-08" db="EMBL/GenBank/DDBJ databases">
        <title>Mouse carnitine transporter 2.</title>
        <authorList>
            <person name="Fisher D.J."/>
            <person name="Lye R.J."/>
            <person name="Hinton B.T."/>
        </authorList>
    </citation>
    <scope>NUCLEOTIDE SEQUENCE [MRNA] (ISOFORMS 1 AND 2)</scope>
    <source>
        <strain>FVB/N</strain>
        <tissue>Testis</tissue>
    </source>
</reference>
<reference key="2">
    <citation type="journal article" date="2004" name="Genome Res.">
        <title>The status, quality, and expansion of the NIH full-length cDNA project: the Mammalian Gene Collection (MGC).</title>
        <authorList>
            <consortium name="The MGC Project Team"/>
        </authorList>
    </citation>
    <scope>NUCLEOTIDE SEQUENCE [LARGE SCALE MRNA] (ISOFORM 1)</scope>
    <source>
        <tissue>Testis</tissue>
    </source>
</reference>
<gene>
    <name evidence="6" type="primary">Slc22a16</name>
</gene>
<sequence>MESCNVELIFDHIGHFGRFQIVLYLICAYQSLSCGIHYLSSVFLSIIPEHACKPPGMVRKAVFHNVSAWRLEDILALRSPEHKDHIMVELQDGEIWELTRCSRTWRENTSHLGYEYSGYKHDSPCFDGYVYDQSKWRNSAVRNFNLVCDQKWYARMIQPLIIFGVMLGSITFSYLSDRFGRRMALWCTSIGVFFFGIASLFIFDYLSFMITRFFLVMASSGYFVVVFVYVMEIIGKKARTWASIHLNTFFAIGAMLVALASYLLKTWWLYQIILCIVTTPFILCCWMLPETPFWLLSEGRYKEAQGTVDTMAVWNKSSSCDLVELLSLDVTRSHNKSPHSIRKHRLADLFHNLDVAKMTLIVWLDWFTANLGYYMFGKEVIRRKENEPLYLLLVGAMEIPAYICLCIWLKRVGRRKTMLLFLLVSSLTCMLHVVMPSDYKTAKRMVALLVKSVISSVFAFIYLYTAELYPTTVRCLAVGSSNMVSHVSSIFIPFTSHFSKVWIFLPQILFGILAILSGLLSLKLPETQDTPMKSTWETTEQQVPENKDSLGEGPPDSFERWDSSRALSFAERWGLSRASPDAEKWGSGRVPPDAGKWGAGIAPPVTERGASGRASLEDESGGSGRAPPEKNTEMENEIENMKVSNLGGF</sequence>